<name>DTD_BACAM</name>
<keyword id="KW-0963">Cytoplasm</keyword>
<keyword id="KW-0378">Hydrolase</keyword>
<keyword id="KW-0694">RNA-binding</keyword>
<keyword id="KW-0820">tRNA-binding</keyword>
<sequence>MKLVVQRVTDASVTVDGAVAGRIGPGIMALVGVTHEDTEEDAAYLADKIVNLRIFDDESGKMNLSLLDTGGEILSVSQFTLYGETKKGRRPNFMNAAKPDQALLLYEKWNELLREKGVKVETGIFGAMMDVQLTNSGPVTLIMDSKQ</sequence>
<dbReference type="EC" id="3.1.1.96" evidence="1"/>
<dbReference type="EMBL" id="KJ499811">
    <property type="protein sequence ID" value="AHY24673.1"/>
    <property type="molecule type" value="Genomic_DNA"/>
</dbReference>
<dbReference type="RefSeq" id="WP_013353029.1">
    <property type="nucleotide sequence ID" value="NZ_BSRV01000003.1"/>
</dbReference>
<dbReference type="SMR" id="A0A023W421"/>
<dbReference type="STRING" id="692420.BAMF_2569"/>
<dbReference type="PATRIC" id="fig|1390.176.peg.648"/>
<dbReference type="eggNOG" id="COG1490">
    <property type="taxonomic scope" value="Bacteria"/>
</dbReference>
<dbReference type="OMA" id="VFGADMK"/>
<dbReference type="BRENDA" id="3.1.1.96">
    <property type="organism ID" value="630"/>
</dbReference>
<dbReference type="GO" id="GO:0005737">
    <property type="term" value="C:cytoplasm"/>
    <property type="evidence" value="ECO:0007669"/>
    <property type="project" value="UniProtKB-SubCell"/>
</dbReference>
<dbReference type="GO" id="GO:0051500">
    <property type="term" value="F:D-tyrosyl-tRNA(Tyr) deacylase activity"/>
    <property type="evidence" value="ECO:0007669"/>
    <property type="project" value="TreeGrafter"/>
</dbReference>
<dbReference type="GO" id="GO:0106026">
    <property type="term" value="F:Gly-tRNA(Ala) deacylase activity"/>
    <property type="evidence" value="ECO:0007669"/>
    <property type="project" value="UniProtKB-UniRule"/>
</dbReference>
<dbReference type="GO" id="GO:0043908">
    <property type="term" value="F:Ser(Gly)-tRNA(Ala) hydrolase activity"/>
    <property type="evidence" value="ECO:0007669"/>
    <property type="project" value="UniProtKB-UniRule"/>
</dbReference>
<dbReference type="GO" id="GO:0000049">
    <property type="term" value="F:tRNA binding"/>
    <property type="evidence" value="ECO:0007669"/>
    <property type="project" value="UniProtKB-UniRule"/>
</dbReference>
<dbReference type="GO" id="GO:0019478">
    <property type="term" value="P:D-amino acid catabolic process"/>
    <property type="evidence" value="ECO:0007669"/>
    <property type="project" value="UniProtKB-UniRule"/>
</dbReference>
<dbReference type="CDD" id="cd00563">
    <property type="entry name" value="Dtyr_deacylase"/>
    <property type="match status" value="1"/>
</dbReference>
<dbReference type="FunFam" id="3.50.80.10:FF:000001">
    <property type="entry name" value="D-aminoacyl-tRNA deacylase"/>
    <property type="match status" value="1"/>
</dbReference>
<dbReference type="Gene3D" id="3.50.80.10">
    <property type="entry name" value="D-tyrosyl-tRNA(Tyr) deacylase"/>
    <property type="match status" value="1"/>
</dbReference>
<dbReference type="HAMAP" id="MF_00518">
    <property type="entry name" value="Deacylase_Dtd"/>
    <property type="match status" value="1"/>
</dbReference>
<dbReference type="InterPro" id="IPR003732">
    <property type="entry name" value="Daa-tRNA_deacyls_DTD"/>
</dbReference>
<dbReference type="InterPro" id="IPR023509">
    <property type="entry name" value="DTD-like_sf"/>
</dbReference>
<dbReference type="NCBIfam" id="TIGR00256">
    <property type="entry name" value="D-aminoacyl-tRNA deacylase"/>
    <property type="match status" value="1"/>
</dbReference>
<dbReference type="PANTHER" id="PTHR10472:SF5">
    <property type="entry name" value="D-AMINOACYL-TRNA DEACYLASE 1"/>
    <property type="match status" value="1"/>
</dbReference>
<dbReference type="PANTHER" id="PTHR10472">
    <property type="entry name" value="D-TYROSYL-TRNA TYR DEACYLASE"/>
    <property type="match status" value="1"/>
</dbReference>
<dbReference type="Pfam" id="PF02580">
    <property type="entry name" value="Tyr_Deacylase"/>
    <property type="match status" value="1"/>
</dbReference>
<dbReference type="SUPFAM" id="SSF69500">
    <property type="entry name" value="DTD-like"/>
    <property type="match status" value="1"/>
</dbReference>
<feature type="chain" id="PRO_0000441714" description="D-aminoacyl-tRNA deacylase">
    <location>
        <begin position="1"/>
        <end position="147"/>
    </location>
</feature>
<feature type="short sequence motif" description="Gly-cisPro motif, important for rejection of L-amino acids" evidence="1">
    <location>
        <begin position="137"/>
        <end position="138"/>
    </location>
</feature>
<protein>
    <recommendedName>
        <fullName evidence="1">D-aminoacyl-tRNA deacylase</fullName>
        <shortName evidence="1">DTD</shortName>
        <ecNumber evidence="1">3.1.1.96</ecNumber>
    </recommendedName>
    <alternativeName>
        <fullName evidence="1">Gly-tRNA(Ala) deacylase</fullName>
    </alternativeName>
</protein>
<reference key="1">
    <citation type="journal article" date="2015" name="Microbiol. Res.">
        <title>The dtd gene from Bacillus amyloliquefaciens encodes a putative D-tyrosyl-tRNATyr deacylase and is a selectable marker for Bacillus subtilis.</title>
        <authorList>
            <person name="Geraskina N.V."/>
            <person name="Butov I.A."/>
            <person name="Yomantas Y.A."/>
            <person name="Stoynova N.V."/>
        </authorList>
    </citation>
    <scope>NUCLEOTIDE SEQUENCE [GENOMIC DNA]</scope>
    <scope>FUNCTION</scope>
    <scope>BIOTECHNOLOGY</scope>
    <source>
        <strain>A50</strain>
    </source>
</reference>
<proteinExistence type="evidence at protein level"/>
<evidence type="ECO:0000255" key="1">
    <source>
        <dbReference type="HAMAP-Rule" id="MF_00518"/>
    </source>
</evidence>
<evidence type="ECO:0000269" key="2">
    <source>
    </source>
</evidence>
<comment type="function">
    <text evidence="1 2">An aminoacyl-tRNA editing enzyme that deacylates mischarged D-aminoacyl-tRNAs. Also deacylates mischarged glycyl-tRNA(Ala), protecting cells against glycine mischarging by AlaRS. Acts via tRNA-based rather than protein-based catalysis; rejects L-amino acids rather than detecting D-amino acids in the active site. By recycling D-aminoacyl-tRNA to D-amino acids and free tRNA molecules, this enzyme counteracts the toxicity associated with the formation of D-aminoacyl-tRNA entities in vivo and helps enforce protein L-homochirality (By similarity). Upon expression in B.subtilis strain 168 confers resistance to D-Tyr and D-Asp, suggesting it acts on both of these amino acids (PubMed:25441601).</text>
</comment>
<comment type="catalytic activity">
    <reaction evidence="1">
        <text>glycyl-tRNA(Ala) + H2O = tRNA(Ala) + glycine + H(+)</text>
        <dbReference type="Rhea" id="RHEA:53744"/>
        <dbReference type="Rhea" id="RHEA-COMP:9657"/>
        <dbReference type="Rhea" id="RHEA-COMP:13640"/>
        <dbReference type="ChEBI" id="CHEBI:15377"/>
        <dbReference type="ChEBI" id="CHEBI:15378"/>
        <dbReference type="ChEBI" id="CHEBI:57305"/>
        <dbReference type="ChEBI" id="CHEBI:78442"/>
        <dbReference type="ChEBI" id="CHEBI:78522"/>
        <dbReference type="EC" id="3.1.1.96"/>
    </reaction>
</comment>
<comment type="catalytic activity">
    <reaction evidence="1">
        <text>a D-aminoacyl-tRNA + H2O = a tRNA + a D-alpha-amino acid + H(+)</text>
        <dbReference type="Rhea" id="RHEA:13953"/>
        <dbReference type="Rhea" id="RHEA-COMP:10123"/>
        <dbReference type="Rhea" id="RHEA-COMP:10124"/>
        <dbReference type="ChEBI" id="CHEBI:15377"/>
        <dbReference type="ChEBI" id="CHEBI:15378"/>
        <dbReference type="ChEBI" id="CHEBI:59871"/>
        <dbReference type="ChEBI" id="CHEBI:78442"/>
        <dbReference type="ChEBI" id="CHEBI:79333"/>
        <dbReference type="EC" id="3.1.1.96"/>
    </reaction>
</comment>
<comment type="subunit">
    <text evidence="1">Homodimer.</text>
</comment>
<comment type="subcellular location">
    <subcellularLocation>
        <location evidence="1">Cytoplasm</location>
    </subcellularLocation>
</comment>
<comment type="domain">
    <text evidence="1">A Gly-cisPro motif from one monomer fits into the active site of the other monomer to allow specific chiral rejection of L-amino acids.</text>
</comment>
<comment type="biotechnology">
    <text evidence="2">Confers the ability to grow in the presence of 20 mg/ml D-Tyr and 500 mg/ml D-Asp to B.subtilis, showing it can be used as a selective marker in bacteria that do not have a functional copy of this gene. Can also function in an E.coli MG1655 dtd deletion, although in this case it confers resistance to toxic amino acid D-Tyr but not D-Trp (D-Asp is not toxic in this experiment) (PubMed:25441601).</text>
</comment>
<comment type="similarity">
    <text evidence="1">Belongs to the DTD family.</text>
</comment>
<organism>
    <name type="scientific">Bacillus amyloliquefaciens</name>
    <name type="common">Bacillus velezensis</name>
    <dbReference type="NCBI Taxonomy" id="1390"/>
    <lineage>
        <taxon>Bacteria</taxon>
        <taxon>Bacillati</taxon>
        <taxon>Bacillota</taxon>
        <taxon>Bacilli</taxon>
        <taxon>Bacillales</taxon>
        <taxon>Bacillaceae</taxon>
        <taxon>Bacillus</taxon>
        <taxon>Bacillus amyloliquefaciens group</taxon>
    </lineage>
</organism>
<accession>A0A023W421</accession>
<gene>
    <name evidence="1" type="primary">dtd</name>
</gene>